<feature type="chain" id="PRO_0000279707" description="Cytoplasmic FMR1-interacting protein 1">
    <location>
        <begin position="1"/>
        <end position="1253"/>
    </location>
</feature>
<feature type="region of interest" description="EIF4E-binding">
    <location>
        <begin position="724"/>
        <end position="732"/>
    </location>
</feature>
<feature type="modified residue" description="Phosphoserine" evidence="1">
    <location>
        <position position="583"/>
    </location>
</feature>
<feature type="modified residue" description="Phosphothreonine" evidence="1">
    <location>
        <position position="1234"/>
    </location>
</feature>
<feature type="splice variant" id="VSP_052348" description="In isoform 2." evidence="11">
    <original>IADKSGSKKTLRSSLEGPTILDIEKFHRESFFYTHLINFS</original>
    <variation>SSAELLRQLKSLGMERLLHVVNAFLRQSYTYPPLLTFG</variation>
    <location>
        <begin position="570"/>
        <end position="609"/>
    </location>
</feature>
<feature type="mutagenesis site" description="EIF4E-binding reduced by 20%; when associated with A-726." evidence="6">
    <original>D</original>
    <variation>A</variation>
    <location>
        <position position="724"/>
    </location>
</feature>
<feature type="mutagenesis site" description="EIF4E-binding reduced by 60%; when associated with E-725, E-726 and K-730." evidence="6">
    <original>D</original>
    <variation>K</variation>
    <location>
        <position position="724"/>
    </location>
</feature>
<feature type="mutagenesis site" description="EIF4E-binding reduced by 70%. EIF4E-binding reduced by 60%; when associated with K-724, E-726 and K-730." evidence="6">
    <original>K</original>
    <variation>E</variation>
    <location>
        <position position="725"/>
    </location>
</feature>
<feature type="mutagenesis site" description="EIF4E-binding reduced by 20%; when associated with A-724." evidence="6">
    <original>R</original>
    <variation>A</variation>
    <location>
        <position position="726"/>
    </location>
</feature>
<feature type="mutagenesis site" description="EIF4E-binding reduced by 60%; when associated with K-724, E-725 and K-730." evidence="6">
    <original>R</original>
    <variation>E</variation>
    <location>
        <position position="726"/>
    </location>
</feature>
<feature type="mutagenesis site" description="EIF4E-binding reduced by 60%; when associated with K-724, E-725 and E-726." evidence="6">
    <original>E</original>
    <variation>K</variation>
    <location>
        <position position="730"/>
    </location>
</feature>
<feature type="sequence conflict" description="In Ref. 1; AAC25773." evidence="12" ref="1">
    <original>A</original>
    <variation>G</variation>
    <location>
        <position position="169"/>
    </location>
</feature>
<feature type="sequence conflict" description="In Ref. 5; AAH47135." evidence="12" ref="5">
    <original>Q</original>
    <variation>H</variation>
    <location>
        <position position="342"/>
    </location>
</feature>
<feature type="sequence conflict" description="In Ref. 1; AAC25773." evidence="12" ref="1">
    <original>V</original>
    <variation>A</variation>
    <location>
        <position position="408"/>
    </location>
</feature>
<feature type="sequence conflict" description="In Ref. 5; AAH52713." evidence="12" ref="5">
    <original>M</original>
    <variation>L</variation>
    <location>
        <position position="561"/>
    </location>
</feature>
<feature type="sequence conflict" description="In Ref. 5; AAH52713." evidence="12" ref="5">
    <original>L</original>
    <variation>A</variation>
    <location>
        <position position="566"/>
    </location>
</feature>
<feature type="sequence conflict" description="In Ref. 1; AAC25773." evidence="12" ref="1">
    <original>V</original>
    <variation>A</variation>
    <location>
        <position position="984"/>
    </location>
</feature>
<feature type="sequence conflict" description="In Ref. 1; AAC25773." evidence="12" ref="1">
    <original>D</original>
    <variation>H</variation>
    <location>
        <position position="1079"/>
    </location>
</feature>
<feature type="sequence conflict" description="In Ref. 3; BAC26130." evidence="12" ref="3">
    <original>L</original>
    <variation>Q</variation>
    <location>
        <position position="1222"/>
    </location>
</feature>
<feature type="sequence conflict" description="In Ref. 1; AAC25773." evidence="12" ref="1">
    <original>S</original>
    <variation>T</variation>
    <location>
        <position position="1233"/>
    </location>
</feature>
<feature type="sequence conflict" description="In Ref. 3; BAE27303/BAE31312." evidence="12" ref="3">
    <original>H</original>
    <variation>Y</variation>
    <location>
        <position position="1238"/>
    </location>
</feature>
<evidence type="ECO:0000250" key="1">
    <source>
        <dbReference type="UniProtKB" id="Q7L576"/>
    </source>
</evidence>
<evidence type="ECO:0000255" key="2"/>
<evidence type="ECO:0000269" key="3">
    <source>
    </source>
</evidence>
<evidence type="ECO:0000269" key="4">
    <source>
    </source>
</evidence>
<evidence type="ECO:0000269" key="5">
    <source>
    </source>
</evidence>
<evidence type="ECO:0000269" key="6">
    <source>
    </source>
</evidence>
<evidence type="ECO:0000269" key="7">
    <source>
    </source>
</evidence>
<evidence type="ECO:0000269" key="8">
    <source>
    </source>
</evidence>
<evidence type="ECO:0000269" key="9">
    <source>
    </source>
</evidence>
<evidence type="ECO:0000269" key="10">
    <source>
    </source>
</evidence>
<evidence type="ECO:0000303" key="11">
    <source>
    </source>
</evidence>
<evidence type="ECO:0000305" key="12"/>
<evidence type="ECO:0000312" key="13">
    <source>
        <dbReference type="EMBL" id="AAC25773.1"/>
    </source>
</evidence>
<evidence type="ECO:0000312" key="14">
    <source>
        <dbReference type="EMBL" id="AAH52713.1"/>
    </source>
</evidence>
<evidence type="ECO:0000312" key="15">
    <source>
        <dbReference type="EMBL" id="AAH54429.1"/>
    </source>
</evidence>
<evidence type="ECO:0000312" key="16">
    <source>
        <dbReference type="EMBL" id="BAC26130.1"/>
    </source>
</evidence>
<evidence type="ECO:0000312" key="17">
    <source>
        <dbReference type="EMBL" id="BAD90235.1"/>
    </source>
</evidence>
<evidence type="ECO:0000312" key="18">
    <source>
        <dbReference type="EMBL" id="BAE27303.1"/>
    </source>
</evidence>
<evidence type="ECO:0000312" key="19">
    <source>
        <dbReference type="EMBL" id="BAE34191.1"/>
    </source>
</evidence>
<evidence type="ECO:0000312" key="20">
    <source>
        <dbReference type="EMBL" id="CAD99196.1"/>
    </source>
</evidence>
<evidence type="ECO:0000312" key="21">
    <source>
        <dbReference type="MGI" id="MGI:1338801"/>
    </source>
</evidence>
<reference evidence="12 13" key="1">
    <citation type="journal article" date="1998" name="Neurosci. Lett.">
        <title>Identification of shyc, a novel gene expressed in the murine developing and adult nervous system.</title>
        <authorList>
            <person name="Koester F."/>
            <person name="Schinke B."/>
            <person name="Niemann S."/>
            <person name="Hermans-Borgmeyer I."/>
        </authorList>
    </citation>
    <scope>NUCLEOTIDE SEQUENCE [MRNA] (ISOFORM 1)</scope>
    <scope>TISSUE SPECIFICITY</scope>
    <source>
        <strain evidence="13">C57BL/6J</strain>
        <tissue evidence="13">Brain</tissue>
    </source>
</reference>
<reference evidence="12 20" key="2">
    <citation type="journal article" date="2004" name="EMBO J.">
        <title>Sra-1 and Nap1 link Rac to actin assembly driving lamellipodia formation.</title>
        <authorList>
            <person name="Steffen A."/>
            <person name="Rottner K."/>
            <person name="Ehinger J."/>
            <person name="Innocenti M."/>
            <person name="Scita G."/>
            <person name="Wehland J."/>
            <person name="Stradal T.E.B."/>
        </authorList>
    </citation>
    <scope>NUCLEOTIDE SEQUENCE [MRNA] (ISOFORM 1)</scope>
    <scope>FUNCTION</scope>
    <scope>COMPONENT OF WAVE2 COMPLEX</scope>
    <scope>SUBCELLULAR LOCATION</scope>
    <scope>DISRUPTION PHENOTYPE</scope>
    <source>
        <strain evidence="20">C57BL/6J</strain>
        <tissue evidence="20">Brain</tissue>
    </source>
</reference>
<reference evidence="12 19" key="3">
    <citation type="journal article" date="2005" name="Science">
        <title>The transcriptional landscape of the mammalian genome.</title>
        <authorList>
            <person name="Carninci P."/>
            <person name="Kasukawa T."/>
            <person name="Katayama S."/>
            <person name="Gough J."/>
            <person name="Frith M.C."/>
            <person name="Maeda N."/>
            <person name="Oyama R."/>
            <person name="Ravasi T."/>
            <person name="Lenhard B."/>
            <person name="Wells C."/>
            <person name="Kodzius R."/>
            <person name="Shimokawa K."/>
            <person name="Bajic V.B."/>
            <person name="Brenner S.E."/>
            <person name="Batalov S."/>
            <person name="Forrest A.R."/>
            <person name="Zavolan M."/>
            <person name="Davis M.J."/>
            <person name="Wilming L.G."/>
            <person name="Aidinis V."/>
            <person name="Allen J.E."/>
            <person name="Ambesi-Impiombato A."/>
            <person name="Apweiler R."/>
            <person name="Aturaliya R.N."/>
            <person name="Bailey T.L."/>
            <person name="Bansal M."/>
            <person name="Baxter L."/>
            <person name="Beisel K.W."/>
            <person name="Bersano T."/>
            <person name="Bono H."/>
            <person name="Chalk A.M."/>
            <person name="Chiu K.P."/>
            <person name="Choudhary V."/>
            <person name="Christoffels A."/>
            <person name="Clutterbuck D.R."/>
            <person name="Crowe M.L."/>
            <person name="Dalla E."/>
            <person name="Dalrymple B.P."/>
            <person name="de Bono B."/>
            <person name="Della Gatta G."/>
            <person name="di Bernardo D."/>
            <person name="Down T."/>
            <person name="Engstrom P."/>
            <person name="Fagiolini M."/>
            <person name="Faulkner G."/>
            <person name="Fletcher C.F."/>
            <person name="Fukushima T."/>
            <person name="Furuno M."/>
            <person name="Futaki S."/>
            <person name="Gariboldi M."/>
            <person name="Georgii-Hemming P."/>
            <person name="Gingeras T.R."/>
            <person name="Gojobori T."/>
            <person name="Green R.E."/>
            <person name="Gustincich S."/>
            <person name="Harbers M."/>
            <person name="Hayashi Y."/>
            <person name="Hensch T.K."/>
            <person name="Hirokawa N."/>
            <person name="Hill D."/>
            <person name="Huminiecki L."/>
            <person name="Iacono M."/>
            <person name="Ikeo K."/>
            <person name="Iwama A."/>
            <person name="Ishikawa T."/>
            <person name="Jakt M."/>
            <person name="Kanapin A."/>
            <person name="Katoh M."/>
            <person name="Kawasawa Y."/>
            <person name="Kelso J."/>
            <person name="Kitamura H."/>
            <person name="Kitano H."/>
            <person name="Kollias G."/>
            <person name="Krishnan S.P."/>
            <person name="Kruger A."/>
            <person name="Kummerfeld S.K."/>
            <person name="Kurochkin I.V."/>
            <person name="Lareau L.F."/>
            <person name="Lazarevic D."/>
            <person name="Lipovich L."/>
            <person name="Liu J."/>
            <person name="Liuni S."/>
            <person name="McWilliam S."/>
            <person name="Madan Babu M."/>
            <person name="Madera M."/>
            <person name="Marchionni L."/>
            <person name="Matsuda H."/>
            <person name="Matsuzawa S."/>
            <person name="Miki H."/>
            <person name="Mignone F."/>
            <person name="Miyake S."/>
            <person name="Morris K."/>
            <person name="Mottagui-Tabar S."/>
            <person name="Mulder N."/>
            <person name="Nakano N."/>
            <person name="Nakauchi H."/>
            <person name="Ng P."/>
            <person name="Nilsson R."/>
            <person name="Nishiguchi S."/>
            <person name="Nishikawa S."/>
            <person name="Nori F."/>
            <person name="Ohara O."/>
            <person name="Okazaki Y."/>
            <person name="Orlando V."/>
            <person name="Pang K.C."/>
            <person name="Pavan W.J."/>
            <person name="Pavesi G."/>
            <person name="Pesole G."/>
            <person name="Petrovsky N."/>
            <person name="Piazza S."/>
            <person name="Reed J."/>
            <person name="Reid J.F."/>
            <person name="Ring B.Z."/>
            <person name="Ringwald M."/>
            <person name="Rost B."/>
            <person name="Ruan Y."/>
            <person name="Salzberg S.L."/>
            <person name="Sandelin A."/>
            <person name="Schneider C."/>
            <person name="Schoenbach C."/>
            <person name="Sekiguchi K."/>
            <person name="Semple C.A."/>
            <person name="Seno S."/>
            <person name="Sessa L."/>
            <person name="Sheng Y."/>
            <person name="Shibata Y."/>
            <person name="Shimada H."/>
            <person name="Shimada K."/>
            <person name="Silva D."/>
            <person name="Sinclair B."/>
            <person name="Sperling S."/>
            <person name="Stupka E."/>
            <person name="Sugiura K."/>
            <person name="Sultana R."/>
            <person name="Takenaka Y."/>
            <person name="Taki K."/>
            <person name="Tammoja K."/>
            <person name="Tan S.L."/>
            <person name="Tang S."/>
            <person name="Taylor M.S."/>
            <person name="Tegner J."/>
            <person name="Teichmann S.A."/>
            <person name="Ueda H.R."/>
            <person name="van Nimwegen E."/>
            <person name="Verardo R."/>
            <person name="Wei C.L."/>
            <person name="Yagi K."/>
            <person name="Yamanishi H."/>
            <person name="Zabarovsky E."/>
            <person name="Zhu S."/>
            <person name="Zimmer A."/>
            <person name="Hide W."/>
            <person name="Bult C."/>
            <person name="Grimmond S.M."/>
            <person name="Teasdale R.D."/>
            <person name="Liu E.T."/>
            <person name="Brusic V."/>
            <person name="Quackenbush J."/>
            <person name="Wahlestedt C."/>
            <person name="Mattick J.S."/>
            <person name="Hume D.A."/>
            <person name="Kai C."/>
            <person name="Sasaki D."/>
            <person name="Tomaru Y."/>
            <person name="Fukuda S."/>
            <person name="Kanamori-Katayama M."/>
            <person name="Suzuki M."/>
            <person name="Aoki J."/>
            <person name="Arakawa T."/>
            <person name="Iida J."/>
            <person name="Imamura K."/>
            <person name="Itoh M."/>
            <person name="Kato T."/>
            <person name="Kawaji H."/>
            <person name="Kawagashira N."/>
            <person name="Kawashima T."/>
            <person name="Kojima M."/>
            <person name="Kondo S."/>
            <person name="Konno H."/>
            <person name="Nakano K."/>
            <person name="Ninomiya N."/>
            <person name="Nishio T."/>
            <person name="Okada M."/>
            <person name="Plessy C."/>
            <person name="Shibata K."/>
            <person name="Shiraki T."/>
            <person name="Suzuki S."/>
            <person name="Tagami M."/>
            <person name="Waki K."/>
            <person name="Watahiki A."/>
            <person name="Okamura-Oho Y."/>
            <person name="Suzuki H."/>
            <person name="Kawai J."/>
            <person name="Hayashizaki Y."/>
        </authorList>
    </citation>
    <scope>NUCLEOTIDE SEQUENCE [LARGE SCALE MRNA] (ISOFORM 1)</scope>
    <source>
        <strain evidence="19">C57BL/6J</strain>
        <tissue evidence="18">Amnion</tissue>
        <tissue>Bone marrow macrophage</tissue>
        <tissue evidence="19">Embryo</tissue>
        <tissue evidence="16">Skin</tissue>
    </source>
</reference>
<reference evidence="12 17" key="4">
    <citation type="submission" date="2005-02" db="EMBL/GenBank/DDBJ databases">
        <title>Prediction of the coding sequences of mouse homologues of KIAA gene. The complete nucleotide sequences of mouse KIAA-homologous cDNAs identified by screening of terminal sequences of cDNA clones randomly sampled from size-fractionated libraries.</title>
        <authorList>
            <person name="Okazaki N."/>
            <person name="Kikuno R.F."/>
            <person name="Ohara R."/>
            <person name="Inamoto S."/>
            <person name="Nagase T."/>
            <person name="Ohara O."/>
            <person name="Koga H."/>
        </authorList>
    </citation>
    <scope>NUCLEOTIDE SEQUENCE [LARGE SCALE MRNA] (ISOFORM 1)</scope>
    <source>
        <tissue evidence="17">Fetal brain</tissue>
    </source>
</reference>
<reference evidence="12 15" key="5">
    <citation type="journal article" date="2004" name="Genome Res.">
        <title>The status, quality, and expansion of the NIH full-length cDNA project: the Mammalian Gene Collection (MGC).</title>
        <authorList>
            <consortium name="The MGC Project Team"/>
        </authorList>
    </citation>
    <scope>NUCLEOTIDE SEQUENCE [LARGE SCALE MRNA] (ISOFORMS 1 AND 2)</scope>
    <source>
        <strain evidence="14">C57BL/6J</strain>
        <strain evidence="15">FVB/N</strain>
        <tissue evidence="14">Brain</tissue>
        <tissue evidence="15">Mammary gland</tissue>
        <tissue>Olfactory epithelium</tissue>
    </source>
</reference>
<reference evidence="12" key="6">
    <citation type="journal article" date="2001" name="Proc. Natl. Acad. Sci. U.S.A.">
        <title>A highly conserved protein family interacting with the fragile X mental retardation protein (FMRP) and displaying selective interactions with FMRP-related proteins FXR1P and FXR2P.</title>
        <authorList>
            <person name="Schenck A."/>
            <person name="Bardoni B."/>
            <person name="Moro A."/>
            <person name="Bagni C."/>
            <person name="Mandel J.-L."/>
        </authorList>
    </citation>
    <scope>FUNCTION</scope>
    <scope>INTERACTION WITH FMR1</scope>
    <scope>SUBCELLULAR LOCATION</scope>
</reference>
<reference key="7">
    <citation type="journal article" date="2008" name="Cell">
        <title>The fragile X syndrome protein represses activity-dependent translation through CYFIP1, a new 4E-BP.</title>
        <authorList>
            <person name="Napoli I."/>
            <person name="Mercaldo V."/>
            <person name="Boyl P.P."/>
            <person name="Eleuteri B."/>
            <person name="Zalfa F."/>
            <person name="De Rubeis S."/>
            <person name="Di Marino D."/>
            <person name="Mohr E."/>
            <person name="Massimi M."/>
            <person name="Falconi M."/>
            <person name="Witke W."/>
            <person name="Costa-Mattioli M."/>
            <person name="Sonenberg N."/>
            <person name="Achsel T."/>
            <person name="Bagni C."/>
        </authorList>
    </citation>
    <scope>FUNCTION</scope>
    <scope>INTERACTION WITH EIF4E AND FMR1</scope>
    <scope>MUTAGENESIS OF ASP-724; LYS-725; ARG-726 AND GLU-730</scope>
</reference>
<reference key="8">
    <citation type="journal article" date="2009" name="Cell">
        <title>Cyfip1 is a putative invasion suppressor in epithelial cancers.</title>
        <authorList>
            <person name="Silva J.M."/>
            <person name="Ezhkova E."/>
            <person name="Silva J."/>
            <person name="Heart S."/>
            <person name="Castillo M."/>
            <person name="Campos Y."/>
            <person name="Castro V."/>
            <person name="Bonilla F."/>
            <person name="Cordon-Cardo C."/>
            <person name="Muthuswamy S.K."/>
            <person name="Powers S."/>
            <person name="Fuchs E."/>
            <person name="Hannon G.J."/>
        </authorList>
    </citation>
    <scope>FUNCTION</scope>
    <scope>DISRUPTION PHENOTYPE</scope>
</reference>
<reference key="9">
    <citation type="journal article" date="2010" name="Cell">
        <title>A tissue-specific atlas of mouse protein phosphorylation and expression.</title>
        <authorList>
            <person name="Huttlin E.L."/>
            <person name="Jedrychowski M.P."/>
            <person name="Elias J.E."/>
            <person name="Goswami T."/>
            <person name="Rad R."/>
            <person name="Beausoleil S.A."/>
            <person name="Villen J."/>
            <person name="Haas W."/>
            <person name="Sowa M.E."/>
            <person name="Gygi S.P."/>
        </authorList>
    </citation>
    <scope>IDENTIFICATION BY MASS SPECTROMETRY [LARGE SCALE ANALYSIS]</scope>
    <source>
        <tissue>Brain</tissue>
        <tissue>Brown adipose tissue</tissue>
        <tissue>Heart</tissue>
        <tissue>Kidney</tissue>
        <tissue>Liver</tissue>
        <tissue>Lung</tissue>
        <tissue>Pancreas</tissue>
        <tissue>Spleen</tissue>
        <tissue>Testis</tissue>
    </source>
</reference>
<reference key="10">
    <citation type="journal article" date="2011" name="EMBO J.">
        <title>NYAP: a phosphoprotein family that links PI3K to WAVE1 signalling in neurons.</title>
        <authorList>
            <person name="Yokoyama K."/>
            <person name="Tezuka T."/>
            <person name="Kotani M."/>
            <person name="Nakazawa T."/>
            <person name="Hoshina N."/>
            <person name="Shimoda Y."/>
            <person name="Kakuta S."/>
            <person name="Sudo K."/>
            <person name="Watanabe K."/>
            <person name="Iwakura Y."/>
            <person name="Yamamoto T."/>
        </authorList>
    </citation>
    <scope>INTERACTION WITH NYAP1; NYAP2 AND MYO16</scope>
</reference>
<reference key="11">
    <citation type="journal article" date="2016" name="Mol. Biol. Cell">
        <title>Retrolinkin recruits the WAVE1 protein complex to facilitate BDNF-induced TrkB endocytosis and dendrite outgrowth.</title>
        <authorList>
            <person name="Xu C."/>
            <person name="Fu X."/>
            <person name="Zhu S."/>
            <person name="Liu J.J."/>
        </authorList>
    </citation>
    <scope>INTERACTION WITH TMEM108</scope>
</reference>
<keyword id="KW-0009">Actin-binding</keyword>
<keyword id="KW-0025">Alternative splicing</keyword>
<keyword id="KW-0966">Cell projection</keyword>
<keyword id="KW-0133">Cell shape</keyword>
<keyword id="KW-0963">Cytoplasm</keyword>
<keyword id="KW-0217">Developmental protein</keyword>
<keyword id="KW-0221">Differentiation</keyword>
<keyword id="KW-0524">Neurogenesis</keyword>
<keyword id="KW-0597">Phosphoprotein</keyword>
<keyword id="KW-1185">Reference proteome</keyword>
<keyword id="KW-0770">Synapse</keyword>
<keyword id="KW-0771">Synaptosome</keyword>
<protein>
    <recommendedName>
        <fullName>Cytoplasmic FMR1-interacting protein 1</fullName>
    </recommendedName>
    <alternativeName>
        <fullName>Specifically Rac1-associated protein 1</fullName>
        <shortName>Sra-1</shortName>
    </alternativeName>
</protein>
<proteinExistence type="evidence at protein level"/>
<name>CYFP1_MOUSE</name>
<accession>Q7TMB8</accession>
<accession>O88558</accession>
<accession>Q3U7Q7</accession>
<accession>Q5DU50</accession>
<accession>Q7TSZ5</accession>
<accession>Q80VN6</accession>
<accession>Q8CE85</accession>
<accession>Q99LY1</accession>
<organism>
    <name type="scientific">Mus musculus</name>
    <name type="common">Mouse</name>
    <dbReference type="NCBI Taxonomy" id="10090"/>
    <lineage>
        <taxon>Eukaryota</taxon>
        <taxon>Metazoa</taxon>
        <taxon>Chordata</taxon>
        <taxon>Craniata</taxon>
        <taxon>Vertebrata</taxon>
        <taxon>Euteleostomi</taxon>
        <taxon>Mammalia</taxon>
        <taxon>Eutheria</taxon>
        <taxon>Euarchontoglires</taxon>
        <taxon>Glires</taxon>
        <taxon>Rodentia</taxon>
        <taxon>Myomorpha</taxon>
        <taxon>Muroidea</taxon>
        <taxon>Muridae</taxon>
        <taxon>Murinae</taxon>
        <taxon>Mus</taxon>
        <taxon>Mus</taxon>
    </lineage>
</organism>
<comment type="function">
    <text evidence="1 3 4 6 7 9">Component of the CYFIP1-EIF4E-FMR1 complex which binds to the mRNA cap and mediates translational repression. In the CYFIP1-EIF4E-FMR1 complex this subunit is an adapter between EIF4E and FMR1. Promotes the translation repression activity of FMR1 in brain probably by mediating its association with EIF4E and mRNA (By similarity). Regulates formation of membrane ruffles and lamellipodia. Plays a role in axon outgrowth. Binds to F-actin but not to RNA. Part of the WAVE complex that regulates actin filament reorganization via its interaction with the Arp2/3 complex. Actin remodeling activity is regulated by RAC1. Regulator of epithelial morphogenesis. May act as an invasion suppressor in cancers. As component of the WAVE1 complex, required for BDNF-NTRK2 endocytic trafficking and signaling from early endosomes (PubMed:27605705).</text>
</comment>
<comment type="subunit">
    <text evidence="1 3 6 8 9">Component of the WAVE1 complex composed of ABI2, CYFIP1 or CYFIP2, BRK1, NCKAP1 and WASF1/WAVE1. Within the complex, a heterodimer containing NCKAP1 and CYFIP1 interacts with a heterotrimer formed by WAVE1, ABI2 and BRK1. Component of the CYFIP1-EIF4E-FMR1 complex which is composed of CYFIP, EIF4E and FMR1. Interacts with FMR1 but does not bind to related proteins FXR1 or FXR2. Interaction with EIF4E stimulates FMR1 binding. Component of the WAVE2 complex composed of ABI1, CYFIP1/SRA1, NCKAP1/NAP1 (NCKAP1L/HEM1 in hematopoietic cells) and WASF2/WAVE2. Interacts with the active GTP-bound form of RAC1. Interacts through its C-terminus with the C-terminus of DPYSL2/CRMP2 which is necessary for DPYSL2-induced axon outgrowth. Interacts with NYAP1, NYAP2 and MYO16. Interacts with TMEM108 (via N-terminus); the interaction associates TMEM108 with the WAVE1 complex (PubMed:27605705).</text>
</comment>
<comment type="interaction">
    <interactant intactId="EBI-772928">
        <id>Q7TMB8</id>
    </interactant>
    <interactant intactId="EBI-2000006">
        <id>P63073</id>
        <label>Eif4e</label>
    </interactant>
    <organismsDiffer>false</organismsDiffer>
    <experiments>5</experiments>
</comment>
<comment type="subcellular location">
    <subcellularLocation>
        <location evidence="3 4">Cytoplasm</location>
    </subcellularLocation>
    <subcellularLocation>
        <location evidence="3">Cytoplasm</location>
        <location evidence="3">Perinuclear region</location>
    </subcellularLocation>
    <subcellularLocation>
        <location evidence="4">Cell projection</location>
        <location evidence="4">Lamellipodium</location>
    </subcellularLocation>
    <subcellularLocation>
        <location evidence="4">Cell projection</location>
        <location evidence="4">Ruffle</location>
    </subcellularLocation>
    <subcellularLocation>
        <location evidence="3">Synapse</location>
        <location evidence="3">Synaptosome</location>
    </subcellularLocation>
    <text evidence="3 4">Highly expressed in the perinuclear region (PubMed:11438699). Enriched in synaptosomes (PubMed:11438699). Also enriched in membrane ruffles and at the tips of lamellipodia (PubMed:14765121).</text>
</comment>
<comment type="alternative products">
    <event type="alternative splicing"/>
    <isoform>
        <id>Q7TMB8-1</id>
        <name evidence="5">1</name>
        <sequence type="displayed"/>
    </isoform>
    <isoform>
        <id>Q7TMB8-2</id>
        <name evidence="5">2</name>
        <sequence type="described" ref="VSP_052348"/>
    </isoform>
</comment>
<comment type="tissue specificity">
    <text evidence="10">Highly expressed in embryonic and adult developing nervous system.</text>
</comment>
<comment type="disruption phenotype">
    <text evidence="4 7">Mice display greatly reduced lamellipodium formation in response to growth factor stimulation or aluminum fluoride treatment. Abnormal epithelial morphogenesis in vitro, and cooperation with oncogenic Ras to produce invasive carcinomas in vivo.</text>
</comment>
<comment type="similarity">
    <text evidence="2">Belongs to the CYFIP family.</text>
</comment>
<comment type="sequence caution" evidence="12">
    <conflict type="erroneous initiation">
        <sequence resource="EMBL-CDS" id="BAD90235"/>
    </conflict>
    <text>Extended N-terminus.</text>
</comment>
<sequence>MAAQVTLEDALSNVDLLEELPLPDQQPCIEPPPSSLLYQPNFNTNFEDRNAFVTGIARYIEQATVHSSMNEMLEEGQEYAVMLYTWRSCSRAIPQVKCNEQPNRVEIYEKTVEVLEPEVTKLMNFMYFQRNAIERFCGEVRRLCHAERRKDFVSEAYLITLGKFINMFAVLDELKNMKCSVKNDHSAYKRAAQFLRKMADPQSIQESQNLSMFLANHNKITQSLQQQLEVISGYEELLADIVNLCVDYYENRMYLTPSEKHMLLKVMGFGLYLMDGSVSNIYKLDAKKRINLSKIDKYFKQLQVVPLFGDMQIELARYIKTSAHYEENKSRWTCASSSSSPQYNICEQMIQIREDHMRFISELARYSNSEVVTGSGRQEAQKTDAEYRKLFDLALQGLQLLSQWSAHVMEVYSWKLVHPTDKYSNKDCPDNAEEYERATRYNYTTEEKFALVEVIAMIKGLQVLMGRMESVFNHAIRHTVYAALQDFSQVTLREPLRQAIKKKKNVIQSVLQAIRKTVCDWETGHEPFNDPALRGEKDPKSGFDIKVPRRAVGPSSTQLYMVRTMLESLIADKSGSKKTLRSSLEGPTILDIEKFHRESFFYTHLINFSETLQQCCDLSQLWFREFFLELTMGRRIQFPIEMSMPWILTDHILETKEASMMEYVLYSLDLYNDSAHYALTKFNKQFLYDEIEAEVNLCFDQFVYKLADQIFAYYKVMAGSLLLDKRLRSECKNQGATIHLPPSNRYETLLKQRHVQLLGRSIDLNRLITQRVSAAMYKSLELAIGRFESEDLTSVVELDGLLEINRMTHKLLSRYLTLDSFDAMFREANHNVSAPYGRITLHVFWELNYDFLPNYCYNGSTNRFVRTVLPFSQEFQRDKQPNAQPQYLHGSKALNLAYSSIYGSYRNFVGPPHFQVICRLLGYQGIAVVMEELLKVVKSLLQGTILQYVKTLMEVMPKICRLPRHEYGSPGILEFFHHQLKDIVEYAELKTVCFQNLREVGNAVLFCLLIEQSLSLEEVCDLLHAAPFQNILPRIHVKEGERVDAKMKRLESKYAPLHLVPLIERLGTPQQIAIAREGDLLTKERLCCGLSMFEVILTRIRTFLDDPIWRGPLPSNGVMHVDECVEFHRLWSAMQFVYCIPVGTHEFTVEQCFGDGLHWAGCMIIVLLGQQRRFAVLDFCYHLLKVQKHDGKDEIIKNVPLKKMVERIRKFQILNDEIITILDKYLKSGDGESTPVEHVRCFQPPIHQSLASS</sequence>
<dbReference type="EMBL" id="AF072697">
    <property type="protein sequence ID" value="AAC25773.1"/>
    <property type="molecule type" value="mRNA"/>
</dbReference>
<dbReference type="EMBL" id="AJ567911">
    <property type="protein sequence ID" value="CAD99196.1"/>
    <property type="molecule type" value="mRNA"/>
</dbReference>
<dbReference type="EMBL" id="AK028811">
    <property type="protein sequence ID" value="BAC26130.1"/>
    <property type="molecule type" value="mRNA"/>
</dbReference>
<dbReference type="EMBL" id="AK146613">
    <property type="protein sequence ID" value="BAE27303.1"/>
    <property type="molecule type" value="mRNA"/>
</dbReference>
<dbReference type="EMBL" id="AK152558">
    <property type="protein sequence ID" value="BAE31312.1"/>
    <property type="molecule type" value="mRNA"/>
</dbReference>
<dbReference type="EMBL" id="AK157773">
    <property type="protein sequence ID" value="BAE34191.1"/>
    <property type="molecule type" value="mRNA"/>
</dbReference>
<dbReference type="EMBL" id="AK220320">
    <property type="protein sequence ID" value="BAD90235.1"/>
    <property type="status" value="ALT_INIT"/>
    <property type="molecule type" value="mRNA"/>
</dbReference>
<dbReference type="EMBL" id="BC002174">
    <property type="protein sequence ID" value="AAH02174.1"/>
    <property type="molecule type" value="mRNA"/>
</dbReference>
<dbReference type="EMBL" id="BC047135">
    <property type="protein sequence ID" value="AAH47135.2"/>
    <property type="molecule type" value="mRNA"/>
</dbReference>
<dbReference type="EMBL" id="BC052713">
    <property type="protein sequence ID" value="AAH52713.1"/>
    <property type="molecule type" value="mRNA"/>
</dbReference>
<dbReference type="EMBL" id="BC054429">
    <property type="protein sequence ID" value="AAH54429.1"/>
    <property type="molecule type" value="mRNA"/>
</dbReference>
<dbReference type="CCDS" id="CCDS21315.1">
    <molecule id="Q7TMB8-1"/>
</dbReference>
<dbReference type="CCDS" id="CCDS52262.1">
    <molecule id="Q7TMB8-2"/>
</dbReference>
<dbReference type="PIR" id="T14349">
    <property type="entry name" value="T14349"/>
</dbReference>
<dbReference type="RefSeq" id="NP_001158133.1">
    <molecule id="Q7TMB8-1"/>
    <property type="nucleotide sequence ID" value="NM_001164661.1"/>
</dbReference>
<dbReference type="RefSeq" id="NP_001158134.1">
    <property type="nucleotide sequence ID" value="NM_001164662.1"/>
</dbReference>
<dbReference type="RefSeq" id="NP_035500.2">
    <molecule id="Q7TMB8-1"/>
    <property type="nucleotide sequence ID" value="NM_011370.3"/>
</dbReference>
<dbReference type="RefSeq" id="XP_006540792.1">
    <molecule id="Q7TMB8-1"/>
    <property type="nucleotide sequence ID" value="XM_006540729.2"/>
</dbReference>
<dbReference type="SMR" id="Q7TMB8"/>
<dbReference type="BioGRID" id="203226">
    <property type="interactions" value="139"/>
</dbReference>
<dbReference type="CORUM" id="Q7TMB8"/>
<dbReference type="FunCoup" id="Q7TMB8">
    <property type="interactions" value="2008"/>
</dbReference>
<dbReference type="IntAct" id="Q7TMB8">
    <property type="interactions" value="125"/>
</dbReference>
<dbReference type="MINT" id="Q7TMB8"/>
<dbReference type="STRING" id="10090.ENSMUSP00000032629"/>
<dbReference type="GlyGen" id="Q7TMB8">
    <property type="glycosylation" value="1 site, 1 O-linked glycan (1 site)"/>
</dbReference>
<dbReference type="iPTMnet" id="Q7TMB8"/>
<dbReference type="PhosphoSitePlus" id="Q7TMB8"/>
<dbReference type="SwissPalm" id="Q7TMB8"/>
<dbReference type="jPOST" id="Q7TMB8"/>
<dbReference type="PaxDb" id="10090-ENSMUSP00000032629"/>
<dbReference type="PeptideAtlas" id="Q7TMB8"/>
<dbReference type="ProteomicsDB" id="277934">
    <molecule id="Q7TMB8-1"/>
</dbReference>
<dbReference type="ProteomicsDB" id="277935">
    <molecule id="Q7TMB8-2"/>
</dbReference>
<dbReference type="Pumba" id="Q7TMB8"/>
<dbReference type="Antibodypedia" id="72407">
    <property type="antibodies" value="113 antibodies from 27 providers"/>
</dbReference>
<dbReference type="DNASU" id="20430"/>
<dbReference type="Ensembl" id="ENSMUST00000032629.16">
    <molecule id="Q7TMB8-1"/>
    <property type="protein sequence ID" value="ENSMUSP00000032629.10"/>
    <property type="gene ID" value="ENSMUSG00000030447.16"/>
</dbReference>
<dbReference type="Ensembl" id="ENSMUST00000163845.4">
    <molecule id="Q7TMB8-1"/>
    <property type="protein sequence ID" value="ENSMUSP00000127717.3"/>
    <property type="gene ID" value="ENSMUSG00000030447.16"/>
</dbReference>
<dbReference type="GeneID" id="20430"/>
<dbReference type="KEGG" id="mmu:20430"/>
<dbReference type="UCSC" id="uc009hdk.2">
    <molecule id="Q7TMB8-1"/>
    <property type="organism name" value="mouse"/>
</dbReference>
<dbReference type="UCSC" id="uc009hdn.2">
    <molecule id="Q7TMB8-2"/>
    <property type="organism name" value="mouse"/>
</dbReference>
<dbReference type="AGR" id="MGI:1338801"/>
<dbReference type="CTD" id="23191"/>
<dbReference type="MGI" id="MGI:1338801">
    <property type="gene designation" value="Cyfip1"/>
</dbReference>
<dbReference type="VEuPathDB" id="HostDB:ENSMUSG00000030447"/>
<dbReference type="eggNOG" id="KOG3534">
    <property type="taxonomic scope" value="Eukaryota"/>
</dbReference>
<dbReference type="GeneTree" id="ENSGT00500000044831"/>
<dbReference type="HOGENOM" id="CLU_002688_2_1_1"/>
<dbReference type="InParanoid" id="Q7TMB8"/>
<dbReference type="OMA" id="HKESFFY"/>
<dbReference type="OrthoDB" id="10265867at2759"/>
<dbReference type="PhylomeDB" id="Q7TMB8"/>
<dbReference type="TreeFam" id="TF312925"/>
<dbReference type="Reactome" id="R-MMU-2029482">
    <property type="pathway name" value="Regulation of actin dynamics for phagocytic cup formation"/>
</dbReference>
<dbReference type="Reactome" id="R-MMU-4420097">
    <property type="pathway name" value="VEGFA-VEGFR2 Pathway"/>
</dbReference>
<dbReference type="Reactome" id="R-MMU-5663213">
    <property type="pathway name" value="RHO GTPases Activate WASPs and WAVEs"/>
</dbReference>
<dbReference type="Reactome" id="R-MMU-6798695">
    <property type="pathway name" value="Neutrophil degranulation"/>
</dbReference>
<dbReference type="Reactome" id="R-MMU-9013149">
    <property type="pathway name" value="RAC1 GTPase cycle"/>
</dbReference>
<dbReference type="Reactome" id="R-MMU-9013404">
    <property type="pathway name" value="RAC2 GTPase cycle"/>
</dbReference>
<dbReference type="Reactome" id="R-MMU-9013408">
    <property type="pathway name" value="RHOG GTPase cycle"/>
</dbReference>
<dbReference type="Reactome" id="R-MMU-9013423">
    <property type="pathway name" value="RAC3 GTPase cycle"/>
</dbReference>
<dbReference type="BioGRID-ORCS" id="20430">
    <property type="hits" value="16 hits in 80 CRISPR screens"/>
</dbReference>
<dbReference type="CD-CODE" id="CE726F99">
    <property type="entry name" value="Postsynaptic density"/>
</dbReference>
<dbReference type="ChiTaRS" id="Cyfip1">
    <property type="organism name" value="mouse"/>
</dbReference>
<dbReference type="PRO" id="PR:Q7TMB8"/>
<dbReference type="Proteomes" id="UP000000589">
    <property type="component" value="Chromosome 7"/>
</dbReference>
<dbReference type="RNAct" id="Q7TMB8">
    <property type="molecule type" value="protein"/>
</dbReference>
<dbReference type="Bgee" id="ENSMUSG00000030447">
    <property type="expression patterns" value="Expressed in saccule of membranous labyrinth and 265 other cell types or tissues"/>
</dbReference>
<dbReference type="ExpressionAtlas" id="Q7TMB8">
    <property type="expression patterns" value="baseline and differential"/>
</dbReference>
<dbReference type="GO" id="GO:0031252">
    <property type="term" value="C:cell leading edge"/>
    <property type="evidence" value="ECO:0000314"/>
    <property type="project" value="MGI"/>
</dbReference>
<dbReference type="GO" id="GO:0030027">
    <property type="term" value="C:lamellipodium"/>
    <property type="evidence" value="ECO:0000314"/>
    <property type="project" value="MGI"/>
</dbReference>
<dbReference type="GO" id="GO:0043005">
    <property type="term" value="C:neuron projection"/>
    <property type="evidence" value="ECO:0000314"/>
    <property type="project" value="UniProtKB"/>
</dbReference>
<dbReference type="GO" id="GO:0048471">
    <property type="term" value="C:perinuclear region of cytoplasm"/>
    <property type="evidence" value="ECO:0000314"/>
    <property type="project" value="UniProtKB"/>
</dbReference>
<dbReference type="GO" id="GO:0098794">
    <property type="term" value="C:postsynapse"/>
    <property type="evidence" value="ECO:0000314"/>
    <property type="project" value="SynGO"/>
</dbReference>
<dbReference type="GO" id="GO:0001726">
    <property type="term" value="C:ruffle"/>
    <property type="evidence" value="ECO:0000250"/>
    <property type="project" value="UniProtKB"/>
</dbReference>
<dbReference type="GO" id="GO:0031209">
    <property type="term" value="C:SCAR complex"/>
    <property type="evidence" value="ECO:0007669"/>
    <property type="project" value="Ensembl"/>
</dbReference>
<dbReference type="GO" id="GO:0051015">
    <property type="term" value="F:actin filament binding"/>
    <property type="evidence" value="ECO:0000250"/>
    <property type="project" value="UniProtKB"/>
</dbReference>
<dbReference type="GO" id="GO:0005522">
    <property type="term" value="F:profilin binding"/>
    <property type="evidence" value="ECO:0000304"/>
    <property type="project" value="MGI"/>
</dbReference>
<dbReference type="GO" id="GO:0031267">
    <property type="term" value="F:small GTPase binding"/>
    <property type="evidence" value="ECO:0000250"/>
    <property type="project" value="UniProtKB"/>
</dbReference>
<dbReference type="GO" id="GO:0030371">
    <property type="term" value="F:translation repressor activity"/>
    <property type="evidence" value="ECO:0000314"/>
    <property type="project" value="UniProtKB"/>
</dbReference>
<dbReference type="GO" id="GO:0048675">
    <property type="term" value="P:axon extension"/>
    <property type="evidence" value="ECO:0000250"/>
    <property type="project" value="UniProtKB"/>
</dbReference>
<dbReference type="GO" id="GO:0050890">
    <property type="term" value="P:cognition"/>
    <property type="evidence" value="ECO:0007669"/>
    <property type="project" value="Ensembl"/>
</dbReference>
<dbReference type="GO" id="GO:0097484">
    <property type="term" value="P:dendrite extension"/>
    <property type="evidence" value="ECO:0000315"/>
    <property type="project" value="UniProtKB"/>
</dbReference>
<dbReference type="GO" id="GO:0030032">
    <property type="term" value="P:lamellipodium assembly"/>
    <property type="evidence" value="ECO:0000314"/>
    <property type="project" value="MGI"/>
</dbReference>
<dbReference type="GO" id="GO:0031175">
    <property type="term" value="P:neuron projection development"/>
    <property type="evidence" value="ECO:0000315"/>
    <property type="project" value="UniProtKB"/>
</dbReference>
<dbReference type="GO" id="GO:2000601">
    <property type="term" value="P:positive regulation of Arp2/3 complex-mediated actin nucleation"/>
    <property type="evidence" value="ECO:0007669"/>
    <property type="project" value="Ensembl"/>
</dbReference>
<dbReference type="GO" id="GO:0010592">
    <property type="term" value="P:positive regulation of lamellipodium assembly"/>
    <property type="evidence" value="ECO:0007669"/>
    <property type="project" value="Ensembl"/>
</dbReference>
<dbReference type="GO" id="GO:0051388">
    <property type="term" value="P:positive regulation of neurotrophin TRK receptor signaling pathway"/>
    <property type="evidence" value="ECO:0000315"/>
    <property type="project" value="UniProtKB"/>
</dbReference>
<dbReference type="GO" id="GO:0016601">
    <property type="term" value="P:Rac protein signal transduction"/>
    <property type="evidence" value="ECO:0007669"/>
    <property type="project" value="Ensembl"/>
</dbReference>
<dbReference type="GO" id="GO:0030833">
    <property type="term" value="P:regulation of actin filament polymerization"/>
    <property type="evidence" value="ECO:0007669"/>
    <property type="project" value="InterPro"/>
</dbReference>
<dbReference type="GO" id="GO:0008360">
    <property type="term" value="P:regulation of cell shape"/>
    <property type="evidence" value="ECO:0007669"/>
    <property type="project" value="UniProtKB-KW"/>
</dbReference>
<dbReference type="GO" id="GO:1905274">
    <property type="term" value="P:regulation of modification of postsynaptic actin cytoskeleton"/>
    <property type="evidence" value="ECO:0000314"/>
    <property type="project" value="SynGO"/>
</dbReference>
<dbReference type="GO" id="GO:0099578">
    <property type="term" value="P:regulation of translation at postsynapse, modulating synaptic transmission"/>
    <property type="evidence" value="ECO:0000314"/>
    <property type="project" value="SynGO"/>
</dbReference>
<dbReference type="GO" id="GO:0031529">
    <property type="term" value="P:ruffle organization"/>
    <property type="evidence" value="ECO:0000250"/>
    <property type="project" value="UniProtKB"/>
</dbReference>
<dbReference type="InterPro" id="IPR009828">
    <property type="entry name" value="CYRIA/CYRIB_Rac1-bd"/>
</dbReference>
<dbReference type="InterPro" id="IPR008081">
    <property type="entry name" value="Cytoplasmic_FMR1-int"/>
</dbReference>
<dbReference type="PANTHER" id="PTHR12195">
    <property type="entry name" value="CYTOPLASMIC FMR1-INTERACTING PROTEIN-RELATED"/>
    <property type="match status" value="1"/>
</dbReference>
<dbReference type="Pfam" id="PF07159">
    <property type="entry name" value="CYRIA-B_Rac1-bd"/>
    <property type="match status" value="1"/>
</dbReference>
<dbReference type="Pfam" id="PF05994">
    <property type="entry name" value="FragX_IP"/>
    <property type="match status" value="1"/>
</dbReference>
<dbReference type="PIRSF" id="PIRSF008153">
    <property type="entry name" value="FMR1_interacting"/>
    <property type="match status" value="1"/>
</dbReference>
<dbReference type="PRINTS" id="PR01698">
    <property type="entry name" value="CYTOFMRPINTP"/>
</dbReference>
<gene>
    <name evidence="15 21" type="primary">Cyfip1</name>
    <name evidence="17" type="synonym">Kiaa0068</name>
    <name evidence="13" type="synonym">Shyc</name>
    <name evidence="20" type="synonym">Sra1</name>
</gene>